<accession>A9MTV3</accession>
<organism>
    <name type="scientific">Salmonella paratyphi B (strain ATCC BAA-1250 / SPB7)</name>
    <dbReference type="NCBI Taxonomy" id="1016998"/>
    <lineage>
        <taxon>Bacteria</taxon>
        <taxon>Pseudomonadati</taxon>
        <taxon>Pseudomonadota</taxon>
        <taxon>Gammaproteobacteria</taxon>
        <taxon>Enterobacterales</taxon>
        <taxon>Enterobacteriaceae</taxon>
        <taxon>Salmonella</taxon>
    </lineage>
</organism>
<gene>
    <name evidence="1" type="primary">glgX</name>
    <name type="ordered locus">SPAB_04392</name>
</gene>
<proteinExistence type="inferred from homology"/>
<evidence type="ECO:0000255" key="1">
    <source>
        <dbReference type="HAMAP-Rule" id="MF_01248"/>
    </source>
</evidence>
<evidence type="ECO:0000256" key="2">
    <source>
        <dbReference type="SAM" id="MobiDB-lite"/>
    </source>
</evidence>
<reference key="1">
    <citation type="submission" date="2007-11" db="EMBL/GenBank/DDBJ databases">
        <authorList>
            <consortium name="The Salmonella enterica serovar Paratyphi B Genome Sequencing Project"/>
            <person name="McClelland M."/>
            <person name="Sanderson E.K."/>
            <person name="Porwollik S."/>
            <person name="Spieth J."/>
            <person name="Clifton W.S."/>
            <person name="Fulton R."/>
            <person name="Cordes M."/>
            <person name="Wollam A."/>
            <person name="Shah N."/>
            <person name="Pepin K."/>
            <person name="Bhonagiri V."/>
            <person name="Nash W."/>
            <person name="Johnson M."/>
            <person name="Thiruvilangam P."/>
            <person name="Wilson R."/>
        </authorList>
    </citation>
    <scope>NUCLEOTIDE SEQUENCE [LARGE SCALE GENOMIC DNA]</scope>
    <source>
        <strain>ATCC BAA-1250 / SPB7</strain>
    </source>
</reference>
<sequence>MTQLAIGEATPHGATYDGHGVNFTLFSAHAERVELCVFDSRGNERRYDLPGRRGDVWHGYLAGARPGLRYGYRVHGPWQPAQGHRFNPAKLLLDPYARRVEGELKDHPLLHGGHDEPDYRDNAAVAPKSVVISDHYDWEDDAAPRTPWGKTVIYEAHVKGLTYLHPELPQEIRGTYKALGHPVMVAYFKQLGITALELLPVAQFASEPRLQRMGLTNYWGYNPMAMFALHSAWASSPEMALDEFRDAVKALHRAGIEVILDIVLNHSAELDLDGPTFSLRGIDNRSYYWIRDDGDYHNWTGCGNTLNLSHPGVVEYACECLRYWVETCHVDGFRFDLASVMGRTPTFRQDAPLFAAIKACPVLSTVKLIAEPWDIGEGGYQVGNFPPPFAEWNDHFRDAARRFWLPRNLTTGEFACRFAASSDVFKRNGRAPGASVNLLTAHDGFTLRDCVCFNQKHNEANGEENRDGTNSNYSDNHGKEGLGGPLDLMERRRDSIHALLATLLLSQGTPMLLAGDEHGHSQHGNNNAYCQDNALTWLDWQQANRGLTTFTAALIRLRQQIPALTGNSWWEEGDGNVRWLNKNAQPLSADEWQNGPKLMQILLSDRFLIAINATLEVTDIVLPEGEWRAVPPFAGEDNPVITAVWQGPAHGLCVFQRG</sequence>
<protein>
    <recommendedName>
        <fullName evidence="1">Glycogen debranching enzyme</fullName>
        <ecNumber evidence="1">3.2.1.196</ecNumber>
    </recommendedName>
    <alternativeName>
        <fullName evidence="1">Limit dextrin alpha-1,6-maltotetraose-hydrolase</fullName>
    </alternativeName>
</protein>
<dbReference type="EC" id="3.2.1.196" evidence="1"/>
<dbReference type="EMBL" id="CP000886">
    <property type="protein sequence ID" value="ABX69708.1"/>
    <property type="molecule type" value="Genomic_DNA"/>
</dbReference>
<dbReference type="RefSeq" id="WP_000192494.1">
    <property type="nucleotide sequence ID" value="NC_010102.1"/>
</dbReference>
<dbReference type="SMR" id="A9MTV3"/>
<dbReference type="CAZy" id="CBM48">
    <property type="family name" value="Carbohydrate-Binding Module Family 48"/>
</dbReference>
<dbReference type="CAZy" id="GH13">
    <property type="family name" value="Glycoside Hydrolase Family 13"/>
</dbReference>
<dbReference type="KEGG" id="spq:SPAB_04392"/>
<dbReference type="PATRIC" id="fig|1016998.12.peg.4135"/>
<dbReference type="HOGENOM" id="CLU_011725_1_1_6"/>
<dbReference type="BioCyc" id="SENT1016998:SPAB_RS17880-MONOMER"/>
<dbReference type="UniPathway" id="UPA00165"/>
<dbReference type="Proteomes" id="UP000008556">
    <property type="component" value="Chromosome"/>
</dbReference>
<dbReference type="GO" id="GO:0004133">
    <property type="term" value="F:glycogen debranching enzyme activity"/>
    <property type="evidence" value="ECO:0007669"/>
    <property type="project" value="UniProtKB-UniRule"/>
</dbReference>
<dbReference type="GO" id="GO:0004553">
    <property type="term" value="F:hydrolase activity, hydrolyzing O-glycosyl compounds"/>
    <property type="evidence" value="ECO:0007669"/>
    <property type="project" value="InterPro"/>
</dbReference>
<dbReference type="GO" id="GO:0005980">
    <property type="term" value="P:glycogen catabolic process"/>
    <property type="evidence" value="ECO:0007669"/>
    <property type="project" value="UniProtKB-UniRule"/>
</dbReference>
<dbReference type="CDD" id="cd11326">
    <property type="entry name" value="AmyAc_Glg_debranch"/>
    <property type="match status" value="1"/>
</dbReference>
<dbReference type="CDD" id="cd02856">
    <property type="entry name" value="E_set_GDE_Isoamylase_N"/>
    <property type="match status" value="1"/>
</dbReference>
<dbReference type="FunFam" id="2.60.40.10:FF:000468">
    <property type="entry name" value="Glycogen debranching enzyme"/>
    <property type="match status" value="1"/>
</dbReference>
<dbReference type="Gene3D" id="3.20.20.80">
    <property type="entry name" value="Glycosidases"/>
    <property type="match status" value="1"/>
</dbReference>
<dbReference type="Gene3D" id="2.60.40.1180">
    <property type="entry name" value="Golgi alpha-mannosidase II"/>
    <property type="match status" value="1"/>
</dbReference>
<dbReference type="Gene3D" id="2.60.40.10">
    <property type="entry name" value="Immunoglobulins"/>
    <property type="match status" value="1"/>
</dbReference>
<dbReference type="HAMAP" id="MF_01248">
    <property type="entry name" value="GlgX"/>
    <property type="match status" value="1"/>
</dbReference>
<dbReference type="InterPro" id="IPR040784">
    <property type="entry name" value="GlgX_C"/>
</dbReference>
<dbReference type="InterPro" id="IPR044505">
    <property type="entry name" value="GlgX_Isoamylase_N_E_set"/>
</dbReference>
<dbReference type="InterPro" id="IPR006047">
    <property type="entry name" value="Glyco_hydro_13_cat_dom"/>
</dbReference>
<dbReference type="InterPro" id="IPR004193">
    <property type="entry name" value="Glyco_hydro_13_N"/>
</dbReference>
<dbReference type="InterPro" id="IPR013780">
    <property type="entry name" value="Glyco_hydro_b"/>
</dbReference>
<dbReference type="InterPro" id="IPR022844">
    <property type="entry name" value="Glycogen_debranch_bac"/>
</dbReference>
<dbReference type="InterPro" id="IPR011837">
    <property type="entry name" value="Glycogen_debranch_GlgX"/>
</dbReference>
<dbReference type="InterPro" id="IPR017853">
    <property type="entry name" value="Glycoside_hydrolase_SF"/>
</dbReference>
<dbReference type="InterPro" id="IPR013783">
    <property type="entry name" value="Ig-like_fold"/>
</dbReference>
<dbReference type="InterPro" id="IPR014756">
    <property type="entry name" value="Ig_E-set"/>
</dbReference>
<dbReference type="NCBIfam" id="TIGR02100">
    <property type="entry name" value="glgX_debranch"/>
    <property type="match status" value="1"/>
</dbReference>
<dbReference type="NCBIfam" id="NF002983">
    <property type="entry name" value="PRK03705.1"/>
    <property type="match status" value="1"/>
</dbReference>
<dbReference type="PANTHER" id="PTHR43002">
    <property type="entry name" value="GLYCOGEN DEBRANCHING ENZYME"/>
    <property type="match status" value="1"/>
</dbReference>
<dbReference type="Pfam" id="PF00128">
    <property type="entry name" value="Alpha-amylase"/>
    <property type="match status" value="1"/>
</dbReference>
<dbReference type="Pfam" id="PF02922">
    <property type="entry name" value="CBM_48"/>
    <property type="match status" value="1"/>
</dbReference>
<dbReference type="Pfam" id="PF18390">
    <property type="entry name" value="GlgX_C"/>
    <property type="match status" value="1"/>
</dbReference>
<dbReference type="SMART" id="SM00642">
    <property type="entry name" value="Aamy"/>
    <property type="match status" value="1"/>
</dbReference>
<dbReference type="SUPFAM" id="SSF51445">
    <property type="entry name" value="(Trans)glycosidases"/>
    <property type="match status" value="1"/>
</dbReference>
<dbReference type="SUPFAM" id="SSF81296">
    <property type="entry name" value="E set domains"/>
    <property type="match status" value="1"/>
</dbReference>
<comment type="function">
    <text evidence="1">Removes maltotriose and maltotetraose chains that are attached by 1,6-alpha-linkage to the limit dextrin main chain, generating a debranched limit dextrin.</text>
</comment>
<comment type="catalytic activity">
    <reaction evidence="1">
        <text>Hydrolysis of (1-&gt;6)-alpha-D-glucosidic linkages to branches with degrees of polymerization of three or four glucose residues in limit dextrin.</text>
        <dbReference type="EC" id="3.2.1.196"/>
    </reaction>
</comment>
<comment type="pathway">
    <text evidence="1">Glycan degradation; glycogen degradation.</text>
</comment>
<comment type="similarity">
    <text evidence="1">Belongs to the glycosyl hydrolase 13 family.</text>
</comment>
<feature type="chain" id="PRO_1000085789" description="Glycogen debranching enzyme">
    <location>
        <begin position="1"/>
        <end position="658"/>
    </location>
</feature>
<feature type="region of interest" description="Disordered" evidence="2">
    <location>
        <begin position="459"/>
        <end position="484"/>
    </location>
</feature>
<feature type="active site" description="Nucleophile" evidence="1">
    <location>
        <position position="336"/>
    </location>
</feature>
<feature type="active site" description="Proton donor" evidence="1">
    <location>
        <position position="371"/>
    </location>
</feature>
<feature type="site" description="Transition state stabilizer" evidence="1">
    <location>
        <position position="443"/>
    </location>
</feature>
<keyword id="KW-0119">Carbohydrate metabolism</keyword>
<keyword id="KW-0321">Glycogen metabolism</keyword>
<keyword id="KW-0326">Glycosidase</keyword>
<keyword id="KW-0378">Hydrolase</keyword>
<name>GLGX_SALPB</name>